<dbReference type="EC" id="6.3.1.2"/>
<dbReference type="EMBL" id="X72751">
    <property type="protein sequence ID" value="CAA51280.1"/>
    <property type="molecule type" value="mRNA"/>
</dbReference>
<dbReference type="EMBL" id="AJ271909">
    <property type="protein sequence ID" value="CAB72423.1"/>
    <property type="molecule type" value="Genomic_DNA"/>
</dbReference>
<dbReference type="PIR" id="S32228">
    <property type="entry name" value="S32228"/>
</dbReference>
<dbReference type="RefSeq" id="NP_001302944.1">
    <property type="nucleotide sequence ID" value="NM_001316015.1"/>
</dbReference>
<dbReference type="SMR" id="Q42624"/>
<dbReference type="EnsemblPlants" id="CDX74644">
    <property type="protein sequence ID" value="CDX74644"/>
    <property type="gene ID" value="GSBRNA2T00114639001"/>
</dbReference>
<dbReference type="GeneID" id="106424972"/>
<dbReference type="Gramene" id="CDX74644">
    <property type="protein sequence ID" value="CDX74644"/>
    <property type="gene ID" value="GSBRNA2T00114639001"/>
</dbReference>
<dbReference type="KEGG" id="bna:106424972"/>
<dbReference type="OMA" id="DICICHY"/>
<dbReference type="OrthoDB" id="1033857at2759"/>
<dbReference type="GO" id="GO:0009507">
    <property type="term" value="C:chloroplast"/>
    <property type="evidence" value="ECO:0007669"/>
    <property type="project" value="UniProtKB-SubCell"/>
</dbReference>
<dbReference type="GO" id="GO:0005524">
    <property type="term" value="F:ATP binding"/>
    <property type="evidence" value="ECO:0007669"/>
    <property type="project" value="UniProtKB-KW"/>
</dbReference>
<dbReference type="GO" id="GO:0004356">
    <property type="term" value="F:glutamine synthetase activity"/>
    <property type="evidence" value="ECO:0007669"/>
    <property type="project" value="UniProtKB-EC"/>
</dbReference>
<dbReference type="GO" id="GO:0006542">
    <property type="term" value="P:glutamine biosynthetic process"/>
    <property type="evidence" value="ECO:0007669"/>
    <property type="project" value="InterPro"/>
</dbReference>
<dbReference type="FunFam" id="3.30.590.10:FF:000004">
    <property type="entry name" value="Glutamine synthetase"/>
    <property type="match status" value="1"/>
</dbReference>
<dbReference type="FunFam" id="3.10.20.70:FF:000003">
    <property type="entry name" value="Glutamine synthetase, chloroplastic"/>
    <property type="match status" value="1"/>
</dbReference>
<dbReference type="Gene3D" id="3.10.20.70">
    <property type="entry name" value="Glutamine synthetase, N-terminal domain"/>
    <property type="match status" value="1"/>
</dbReference>
<dbReference type="Gene3D" id="3.30.590.10">
    <property type="entry name" value="Glutamine synthetase/guanido kinase, catalytic domain"/>
    <property type="match status" value="1"/>
</dbReference>
<dbReference type="InterPro" id="IPR008147">
    <property type="entry name" value="Gln_synt_N"/>
</dbReference>
<dbReference type="InterPro" id="IPR036651">
    <property type="entry name" value="Gln_synt_N_sf"/>
</dbReference>
<dbReference type="InterPro" id="IPR014746">
    <property type="entry name" value="Gln_synth/guanido_kin_cat_dom"/>
</dbReference>
<dbReference type="InterPro" id="IPR008146">
    <property type="entry name" value="Gln_synth_cat_dom"/>
</dbReference>
<dbReference type="InterPro" id="IPR027303">
    <property type="entry name" value="Gln_synth_gly_rich_site"/>
</dbReference>
<dbReference type="InterPro" id="IPR027302">
    <property type="entry name" value="Gln_synth_N_conserv_site"/>
</dbReference>
<dbReference type="InterPro" id="IPR050292">
    <property type="entry name" value="Glutamine_Synthetase"/>
</dbReference>
<dbReference type="PANTHER" id="PTHR20852">
    <property type="entry name" value="GLUTAMINE SYNTHETASE"/>
    <property type="match status" value="1"/>
</dbReference>
<dbReference type="PANTHER" id="PTHR20852:SF118">
    <property type="entry name" value="GLUTAMINE SYNTHETASE, CHLOROPLASTIC_MITOCHONDRIAL"/>
    <property type="match status" value="1"/>
</dbReference>
<dbReference type="Pfam" id="PF00120">
    <property type="entry name" value="Gln-synt_C"/>
    <property type="match status" value="1"/>
</dbReference>
<dbReference type="Pfam" id="PF03951">
    <property type="entry name" value="Gln-synt_N"/>
    <property type="match status" value="1"/>
</dbReference>
<dbReference type="SMART" id="SM01230">
    <property type="entry name" value="Gln-synt_C"/>
    <property type="match status" value="1"/>
</dbReference>
<dbReference type="SUPFAM" id="SSF54368">
    <property type="entry name" value="Glutamine synthetase, N-terminal domain"/>
    <property type="match status" value="1"/>
</dbReference>
<dbReference type="SUPFAM" id="SSF55931">
    <property type="entry name" value="Glutamine synthetase/guanido kinase"/>
    <property type="match status" value="1"/>
</dbReference>
<dbReference type="PROSITE" id="PS00180">
    <property type="entry name" value="GLNA_1"/>
    <property type="match status" value="1"/>
</dbReference>
<dbReference type="PROSITE" id="PS00181">
    <property type="entry name" value="GLNA_ATP"/>
    <property type="match status" value="1"/>
</dbReference>
<dbReference type="PROSITE" id="PS51986">
    <property type="entry name" value="GS_BETA_GRASP"/>
    <property type="match status" value="1"/>
</dbReference>
<dbReference type="PROSITE" id="PS51987">
    <property type="entry name" value="GS_CATALYTIC"/>
    <property type="match status" value="1"/>
</dbReference>
<feature type="transit peptide" description="Chloroplast" evidence="3">
    <location>
        <begin position="1"/>
        <end position="49"/>
    </location>
</feature>
<feature type="chain" id="PRO_0000011175" description="Glutamine synthetase, chloroplastic">
    <location>
        <begin position="50"/>
        <end position="428"/>
    </location>
</feature>
<feature type="domain" description="GS beta-grasp" evidence="4">
    <location>
        <begin position="75"/>
        <end position="155"/>
    </location>
</feature>
<feature type="domain" description="GS catalytic" evidence="5">
    <location>
        <begin position="159"/>
        <end position="428"/>
    </location>
</feature>
<feature type="region of interest" description="Disordered" evidence="6">
    <location>
        <begin position="94"/>
        <end position="120"/>
    </location>
</feature>
<feature type="modified residue" description="Phosphoserine" evidence="2">
    <location>
        <position position="104"/>
    </location>
</feature>
<feature type="sequence conflict" description="In Ref. 2; CAB72423." evidence="7" ref="2">
    <original>L</original>
    <variation>I</variation>
    <location>
        <position position="50"/>
    </location>
</feature>
<feature type="sequence conflict" description="In Ref. 2; CAB72423." evidence="7" ref="2">
    <original>I</original>
    <variation>Y</variation>
    <location>
        <position position="82"/>
    </location>
</feature>
<feature type="sequence conflict" description="In Ref. 2; CAB72423." evidence="7" ref="2">
    <original>G</original>
    <variation>R</variation>
    <location>
        <position position="263"/>
    </location>
</feature>
<feature type="sequence conflict" description="In Ref. 2; CAB72423." evidence="7" ref="2">
    <original>S</original>
    <variation>I</variation>
    <location>
        <position position="338"/>
    </location>
</feature>
<reference key="1">
    <citation type="journal article" date="1993" name="Plant Physiol.">
        <title>Chloroplastic glutamine synthetase from Brassica napus.</title>
        <authorList>
            <person name="Ochs G."/>
            <person name="Schock G."/>
            <person name="Wild A."/>
        </authorList>
    </citation>
    <scope>NUCLEOTIDE SEQUENCE [MRNA]</scope>
    <source>
        <tissue>Leaf</tissue>
    </source>
</reference>
<reference key="2">
    <citation type="submission" date="2000-02" db="EMBL/GenBank/DDBJ databases">
        <title>Cloning and Sequencing of genomic fragments coding for glutamine synthetase of Brassica napus.</title>
        <authorList>
            <person name="Wojtyna S."/>
            <person name="Ochs G."/>
            <person name="Wild A."/>
        </authorList>
    </citation>
    <scope>NUCLEOTIDE SEQUENCE [GENOMIC DNA]</scope>
    <source>
        <strain>cv. Drakkar</strain>
        <tissue>Leaf</tissue>
    </source>
</reference>
<protein>
    <recommendedName>
        <fullName>Glutamine synthetase, chloroplastic</fullName>
        <ecNumber>6.3.1.2</ecNumber>
    </recommendedName>
    <alternativeName>
        <fullName>GS2</fullName>
    </alternativeName>
    <alternativeName>
        <fullName>Glutamate--ammonia ligase</fullName>
    </alternativeName>
</protein>
<name>GLNAC_BRANA</name>
<keyword id="KW-0067">ATP-binding</keyword>
<keyword id="KW-0150">Chloroplast</keyword>
<keyword id="KW-0436">Ligase</keyword>
<keyword id="KW-0547">Nucleotide-binding</keyword>
<keyword id="KW-0597">Phosphoprotein</keyword>
<keyword id="KW-0934">Plastid</keyword>
<keyword id="KW-0809">Transit peptide</keyword>
<proteinExistence type="evidence at transcript level"/>
<organism>
    <name type="scientific">Brassica napus</name>
    <name type="common">Rape</name>
    <dbReference type="NCBI Taxonomy" id="3708"/>
    <lineage>
        <taxon>Eukaryota</taxon>
        <taxon>Viridiplantae</taxon>
        <taxon>Streptophyta</taxon>
        <taxon>Embryophyta</taxon>
        <taxon>Tracheophyta</taxon>
        <taxon>Spermatophyta</taxon>
        <taxon>Magnoliopsida</taxon>
        <taxon>eudicotyledons</taxon>
        <taxon>Gunneridae</taxon>
        <taxon>Pentapetalae</taxon>
        <taxon>rosids</taxon>
        <taxon>malvids</taxon>
        <taxon>Brassicales</taxon>
        <taxon>Brassicaceae</taxon>
        <taxon>Brassiceae</taxon>
        <taxon>Brassica</taxon>
    </lineage>
</organism>
<sequence>MAQILAASPTCQMRLTKPSSIASSKLWNSVVLKQKKQSSSKVRSFKVMALQSDNSTINRVESLLNLDTKPFTDRIIAEYIWIGGSGIDLRSKSRTLEKPVEDPSELPKWNYDGSSTGQAPGEDSEVILYPQAIFRDPFRGGNNILVICDTYTPAGEPIPTNKRARAAEIFSNKKVNEEIPWFGIEQEYTLLQPNVNWPLGWPVGAYPGPQGPYYCGVGAEKSWGRDISDAHYKACLYAGINISGTNGEVMPGQWEFQVGPSVGIEAGDHVWCARYLLERITEQAGVVLTLDPKPIEGDWNGAGCHTNYSTKSMREDGGFEVIKKAILNLSLRHMEHISAYGEGNERRLTGKHETASIDQFSWGVANRGCSIRVGRDTEKKGKGYLEDRRPASNMDPYIVTSLLAETTLLWEPTLEAEALAAQKLSLKV</sequence>
<evidence type="ECO:0000250" key="1"/>
<evidence type="ECO:0000250" key="2">
    <source>
        <dbReference type="UniProtKB" id="Q43127"/>
    </source>
</evidence>
<evidence type="ECO:0000255" key="3"/>
<evidence type="ECO:0000255" key="4">
    <source>
        <dbReference type="PROSITE-ProRule" id="PRU01330"/>
    </source>
</evidence>
<evidence type="ECO:0000255" key="5">
    <source>
        <dbReference type="PROSITE-ProRule" id="PRU01331"/>
    </source>
</evidence>
<evidence type="ECO:0000256" key="6">
    <source>
        <dbReference type="SAM" id="MobiDB-lite"/>
    </source>
</evidence>
<evidence type="ECO:0000305" key="7"/>
<comment type="function">
    <text evidence="1">The light-modulated chloroplast enzyme, encoded by a nuclear gene and expressed primarily in leaves, is responsible for the reassimilation of the ammonia generated by photorespiration.</text>
</comment>
<comment type="catalytic activity">
    <reaction>
        <text>L-glutamate + NH4(+) + ATP = L-glutamine + ADP + phosphate + H(+)</text>
        <dbReference type="Rhea" id="RHEA:16169"/>
        <dbReference type="ChEBI" id="CHEBI:15378"/>
        <dbReference type="ChEBI" id="CHEBI:28938"/>
        <dbReference type="ChEBI" id="CHEBI:29985"/>
        <dbReference type="ChEBI" id="CHEBI:30616"/>
        <dbReference type="ChEBI" id="CHEBI:43474"/>
        <dbReference type="ChEBI" id="CHEBI:58359"/>
        <dbReference type="ChEBI" id="CHEBI:456216"/>
        <dbReference type="EC" id="6.3.1.2"/>
    </reaction>
</comment>
<comment type="subunit">
    <text evidence="1">Homooctamer.</text>
</comment>
<comment type="subcellular location">
    <subcellularLocation>
        <location>Plastid</location>
        <location>Chloroplast</location>
    </subcellularLocation>
</comment>
<comment type="similarity">
    <text evidence="7">Belongs to the glutamine synthetase family.</text>
</comment>
<gene>
    <name type="primary">GLN2</name>
    <name type="synonym">GLN</name>
</gene>
<accession>Q42624</accession>
<accession>Q9M429</accession>